<organism>
    <name type="scientific">Rhizobium leguminosarum bv. trifolii (strain WSM2304)</name>
    <dbReference type="NCBI Taxonomy" id="395492"/>
    <lineage>
        <taxon>Bacteria</taxon>
        <taxon>Pseudomonadati</taxon>
        <taxon>Pseudomonadota</taxon>
        <taxon>Alphaproteobacteria</taxon>
        <taxon>Hyphomicrobiales</taxon>
        <taxon>Rhizobiaceae</taxon>
        <taxon>Rhizobium/Agrobacterium group</taxon>
        <taxon>Rhizobium</taxon>
    </lineage>
</organism>
<keyword id="KW-0067">ATP-binding</keyword>
<keyword id="KW-0963">Cytoplasm</keyword>
<keyword id="KW-0436">Ligase</keyword>
<keyword id="KW-0547">Nucleotide-binding</keyword>
<keyword id="KW-0658">Purine biosynthesis</keyword>
<keyword id="KW-1185">Reference proteome</keyword>
<name>PUR5_RHILW</name>
<comment type="catalytic activity">
    <reaction evidence="1">
        <text>2-formamido-N(1)-(5-O-phospho-beta-D-ribosyl)acetamidine + ATP = 5-amino-1-(5-phospho-beta-D-ribosyl)imidazole + ADP + phosphate + H(+)</text>
        <dbReference type="Rhea" id="RHEA:23032"/>
        <dbReference type="ChEBI" id="CHEBI:15378"/>
        <dbReference type="ChEBI" id="CHEBI:30616"/>
        <dbReference type="ChEBI" id="CHEBI:43474"/>
        <dbReference type="ChEBI" id="CHEBI:137981"/>
        <dbReference type="ChEBI" id="CHEBI:147287"/>
        <dbReference type="ChEBI" id="CHEBI:456216"/>
        <dbReference type="EC" id="6.3.3.1"/>
    </reaction>
</comment>
<comment type="pathway">
    <text evidence="1">Purine metabolism; IMP biosynthesis via de novo pathway; 5-amino-1-(5-phospho-D-ribosyl)imidazole from N(2)-formyl-N(1)-(5-phospho-D-ribosyl)glycinamide: step 2/2.</text>
</comment>
<comment type="subcellular location">
    <subcellularLocation>
        <location evidence="1">Cytoplasm</location>
    </subcellularLocation>
</comment>
<comment type="similarity">
    <text evidence="1">Belongs to the AIR synthase family.</text>
</comment>
<evidence type="ECO:0000255" key="1">
    <source>
        <dbReference type="HAMAP-Rule" id="MF_00741"/>
    </source>
</evidence>
<proteinExistence type="inferred from homology"/>
<reference key="1">
    <citation type="journal article" date="2010" name="Stand. Genomic Sci.">
        <title>Complete genome sequence of Rhizobium leguminosarum bv trifolii strain WSM2304, an effective microsymbiont of the South American clover Trifolium polymorphum.</title>
        <authorList>
            <person name="Reeve W."/>
            <person name="O'Hara G."/>
            <person name="Chain P."/>
            <person name="Ardley J."/>
            <person name="Brau L."/>
            <person name="Nandesena K."/>
            <person name="Tiwari R."/>
            <person name="Malfatti S."/>
            <person name="Kiss H."/>
            <person name="Lapidus A."/>
            <person name="Copeland A."/>
            <person name="Nolan M."/>
            <person name="Land M."/>
            <person name="Ivanova N."/>
            <person name="Mavromatis K."/>
            <person name="Markowitz V."/>
            <person name="Kyrpides N."/>
            <person name="Melino V."/>
            <person name="Denton M."/>
            <person name="Yates R."/>
            <person name="Howieson J."/>
        </authorList>
    </citation>
    <scope>NUCLEOTIDE SEQUENCE [LARGE SCALE GENOMIC DNA]</scope>
    <source>
        <strain>WSM2304</strain>
    </source>
</reference>
<accession>B5ZX12</accession>
<sequence>MSQSGKNGLTYSDAGVDIDAGNLLVEKIKPAVRSTRRPGADGEIGGFGGLFDLKAAGFNDPVLVAANDGVGTKLKIAIDADYHDTVGIDLVAMCVNDLVVQGAEPLFFLDYFATGKLDPDQGAAIVGGIAAGCRQAGCALIGGETAEMPGMYSSGDYDLAGFAVGAAERGKLLPSGDIAEGDVILGLASSGVHSNGFSLVRKIVELSGLGWDAPAPFASDKKLGEALLEPTRIYVKPLLKAIRETGAIKALAHITGGGFPENIPRVLPKHLAAEIDLAAVKAPPVFSWLARTGGVETKEMLRTFNCGVGMIAVVASENVAAVSAALEAEGETVVTLGRMIARDEGAAGTVYQGTLAL</sequence>
<feature type="chain" id="PRO_1000193038" description="Phosphoribosylformylglycinamidine cyclo-ligase">
    <location>
        <begin position="1"/>
        <end position="357"/>
    </location>
</feature>
<protein>
    <recommendedName>
        <fullName evidence="1">Phosphoribosylformylglycinamidine cyclo-ligase</fullName>
        <ecNumber evidence="1">6.3.3.1</ecNumber>
    </recommendedName>
    <alternativeName>
        <fullName evidence="1">AIR synthase</fullName>
    </alternativeName>
    <alternativeName>
        <fullName evidence="1">AIRS</fullName>
    </alternativeName>
    <alternativeName>
        <fullName evidence="1">Phosphoribosyl-aminoimidazole synthetase</fullName>
    </alternativeName>
</protein>
<dbReference type="EC" id="6.3.3.1" evidence="1"/>
<dbReference type="EMBL" id="CP001191">
    <property type="protein sequence ID" value="ACI54389.1"/>
    <property type="molecule type" value="Genomic_DNA"/>
</dbReference>
<dbReference type="RefSeq" id="WP_012557195.1">
    <property type="nucleotide sequence ID" value="NC_011369.1"/>
</dbReference>
<dbReference type="SMR" id="B5ZX12"/>
<dbReference type="STRING" id="395492.Rleg2_1095"/>
<dbReference type="KEGG" id="rlt:Rleg2_1095"/>
<dbReference type="eggNOG" id="COG0150">
    <property type="taxonomic scope" value="Bacteria"/>
</dbReference>
<dbReference type="HOGENOM" id="CLU_047116_0_0_5"/>
<dbReference type="UniPathway" id="UPA00074">
    <property type="reaction ID" value="UER00129"/>
</dbReference>
<dbReference type="Proteomes" id="UP000008330">
    <property type="component" value="Chromosome"/>
</dbReference>
<dbReference type="GO" id="GO:0005829">
    <property type="term" value="C:cytosol"/>
    <property type="evidence" value="ECO:0007669"/>
    <property type="project" value="TreeGrafter"/>
</dbReference>
<dbReference type="GO" id="GO:0005524">
    <property type="term" value="F:ATP binding"/>
    <property type="evidence" value="ECO:0007669"/>
    <property type="project" value="UniProtKB-KW"/>
</dbReference>
<dbReference type="GO" id="GO:0004637">
    <property type="term" value="F:phosphoribosylamine-glycine ligase activity"/>
    <property type="evidence" value="ECO:0007669"/>
    <property type="project" value="TreeGrafter"/>
</dbReference>
<dbReference type="GO" id="GO:0004641">
    <property type="term" value="F:phosphoribosylformylglycinamidine cyclo-ligase activity"/>
    <property type="evidence" value="ECO:0007669"/>
    <property type="project" value="UniProtKB-UniRule"/>
</dbReference>
<dbReference type="GO" id="GO:0006189">
    <property type="term" value="P:'de novo' IMP biosynthetic process"/>
    <property type="evidence" value="ECO:0007669"/>
    <property type="project" value="UniProtKB-UniRule"/>
</dbReference>
<dbReference type="GO" id="GO:0046084">
    <property type="term" value="P:adenine biosynthetic process"/>
    <property type="evidence" value="ECO:0007669"/>
    <property type="project" value="TreeGrafter"/>
</dbReference>
<dbReference type="CDD" id="cd02196">
    <property type="entry name" value="PurM"/>
    <property type="match status" value="1"/>
</dbReference>
<dbReference type="FunFam" id="3.30.1330.10:FF:000001">
    <property type="entry name" value="Phosphoribosylformylglycinamidine cyclo-ligase"/>
    <property type="match status" value="1"/>
</dbReference>
<dbReference type="FunFam" id="3.90.650.10:FF:000019">
    <property type="entry name" value="Trifunctional purine biosynthetic protein adenosine-3"/>
    <property type="match status" value="1"/>
</dbReference>
<dbReference type="Gene3D" id="3.90.650.10">
    <property type="entry name" value="PurM-like C-terminal domain"/>
    <property type="match status" value="1"/>
</dbReference>
<dbReference type="Gene3D" id="3.30.1330.10">
    <property type="entry name" value="PurM-like, N-terminal domain"/>
    <property type="match status" value="1"/>
</dbReference>
<dbReference type="HAMAP" id="MF_00741">
    <property type="entry name" value="AIRS"/>
    <property type="match status" value="1"/>
</dbReference>
<dbReference type="InterPro" id="IPR010918">
    <property type="entry name" value="PurM-like_C_dom"/>
</dbReference>
<dbReference type="InterPro" id="IPR036676">
    <property type="entry name" value="PurM-like_C_sf"/>
</dbReference>
<dbReference type="InterPro" id="IPR016188">
    <property type="entry name" value="PurM-like_N"/>
</dbReference>
<dbReference type="InterPro" id="IPR036921">
    <property type="entry name" value="PurM-like_N_sf"/>
</dbReference>
<dbReference type="InterPro" id="IPR004733">
    <property type="entry name" value="PurM_cligase"/>
</dbReference>
<dbReference type="NCBIfam" id="TIGR00878">
    <property type="entry name" value="purM"/>
    <property type="match status" value="1"/>
</dbReference>
<dbReference type="PANTHER" id="PTHR10520:SF12">
    <property type="entry name" value="TRIFUNCTIONAL PURINE BIOSYNTHETIC PROTEIN ADENOSINE-3"/>
    <property type="match status" value="1"/>
</dbReference>
<dbReference type="PANTHER" id="PTHR10520">
    <property type="entry name" value="TRIFUNCTIONAL PURINE BIOSYNTHETIC PROTEIN ADENOSINE-3-RELATED"/>
    <property type="match status" value="1"/>
</dbReference>
<dbReference type="Pfam" id="PF00586">
    <property type="entry name" value="AIRS"/>
    <property type="match status" value="1"/>
</dbReference>
<dbReference type="Pfam" id="PF02769">
    <property type="entry name" value="AIRS_C"/>
    <property type="match status" value="1"/>
</dbReference>
<dbReference type="SUPFAM" id="SSF56042">
    <property type="entry name" value="PurM C-terminal domain-like"/>
    <property type="match status" value="1"/>
</dbReference>
<dbReference type="SUPFAM" id="SSF55326">
    <property type="entry name" value="PurM N-terminal domain-like"/>
    <property type="match status" value="1"/>
</dbReference>
<gene>
    <name evidence="1" type="primary">purM</name>
    <name type="ordered locus">Rleg2_1095</name>
</gene>